<gene>
    <name type="primary">PPE30</name>
    <name type="ordered locus">Rv1802</name>
    <name type="ORF">MTV049.24</name>
</gene>
<reference key="1">
    <citation type="journal article" date="1998" name="Nature">
        <title>Deciphering the biology of Mycobacterium tuberculosis from the complete genome sequence.</title>
        <authorList>
            <person name="Cole S.T."/>
            <person name="Brosch R."/>
            <person name="Parkhill J."/>
            <person name="Garnier T."/>
            <person name="Churcher C.M."/>
            <person name="Harris D.E."/>
            <person name="Gordon S.V."/>
            <person name="Eiglmeier K."/>
            <person name="Gas S."/>
            <person name="Barry C.E. III"/>
            <person name="Tekaia F."/>
            <person name="Badcock K."/>
            <person name="Basham D."/>
            <person name="Brown D."/>
            <person name="Chillingworth T."/>
            <person name="Connor R."/>
            <person name="Davies R.M."/>
            <person name="Devlin K."/>
            <person name="Feltwell T."/>
            <person name="Gentles S."/>
            <person name="Hamlin N."/>
            <person name="Holroyd S."/>
            <person name="Hornsby T."/>
            <person name="Jagels K."/>
            <person name="Krogh A."/>
            <person name="McLean J."/>
            <person name="Moule S."/>
            <person name="Murphy L.D."/>
            <person name="Oliver S."/>
            <person name="Osborne J."/>
            <person name="Quail M.A."/>
            <person name="Rajandream M.A."/>
            <person name="Rogers J."/>
            <person name="Rutter S."/>
            <person name="Seeger K."/>
            <person name="Skelton S."/>
            <person name="Squares S."/>
            <person name="Squares R."/>
            <person name="Sulston J.E."/>
            <person name="Taylor K."/>
            <person name="Whitehead S."/>
            <person name="Barrell B.G."/>
        </authorList>
    </citation>
    <scope>NUCLEOTIDE SEQUENCE [LARGE SCALE GENOMIC DNA]</scope>
    <source>
        <strain>ATCC 25618 / H37Rv</strain>
    </source>
</reference>
<feature type="chain" id="PRO_0000217848" description="Uncharacterized PPE family protein PPE30">
    <location>
        <begin position="1"/>
        <end position="463"/>
    </location>
</feature>
<proteinExistence type="inferred from homology"/>
<keyword id="KW-1185">Reference proteome</keyword>
<protein>
    <recommendedName>
        <fullName>Uncharacterized PPE family protein PPE30</fullName>
    </recommendedName>
</protein>
<dbReference type="EMBL" id="AL123456">
    <property type="protein sequence ID" value="CCP44568.1"/>
    <property type="molecule type" value="Genomic_DNA"/>
</dbReference>
<dbReference type="PIR" id="C70931">
    <property type="entry name" value="C70931"/>
</dbReference>
<dbReference type="RefSeq" id="WP_003409061.1">
    <property type="nucleotide sequence ID" value="NZ_NVQJ01000037.1"/>
</dbReference>
<dbReference type="RefSeq" id="YP_177841.1">
    <property type="nucleotide sequence ID" value="NC_000962.3"/>
</dbReference>
<dbReference type="SMR" id="P9WI07"/>
<dbReference type="STRING" id="83332.Rv1802"/>
<dbReference type="PaxDb" id="83332-Rv1802"/>
<dbReference type="GeneID" id="885542"/>
<dbReference type="KEGG" id="mtu:Rv1802"/>
<dbReference type="KEGG" id="mtv:RVBD_1802"/>
<dbReference type="PATRIC" id="fig|83332.111.peg.2007"/>
<dbReference type="TubercuList" id="Rv1802"/>
<dbReference type="eggNOG" id="COG5651">
    <property type="taxonomic scope" value="Bacteria"/>
</dbReference>
<dbReference type="InParanoid" id="P9WI07"/>
<dbReference type="Proteomes" id="UP000001584">
    <property type="component" value="Chromosome"/>
</dbReference>
<dbReference type="GO" id="GO:0052572">
    <property type="term" value="P:response to host immune response"/>
    <property type="evidence" value="ECO:0000318"/>
    <property type="project" value="GO_Central"/>
</dbReference>
<dbReference type="FunFam" id="1.20.1260.20:FF:000001">
    <property type="entry name" value="PPE family protein PPE41"/>
    <property type="match status" value="1"/>
</dbReference>
<dbReference type="Gene3D" id="1.20.1260.20">
    <property type="entry name" value="PPE superfamily"/>
    <property type="match status" value="1"/>
</dbReference>
<dbReference type="InterPro" id="IPR022171">
    <property type="entry name" value="PPE_C"/>
</dbReference>
<dbReference type="InterPro" id="IPR000030">
    <property type="entry name" value="PPE_dom"/>
</dbReference>
<dbReference type="InterPro" id="IPR038332">
    <property type="entry name" value="PPE_sf"/>
</dbReference>
<dbReference type="PANTHER" id="PTHR46766">
    <property type="entry name" value="GLUTAMINE-RICH PROTEIN 2"/>
    <property type="match status" value="1"/>
</dbReference>
<dbReference type="PANTHER" id="PTHR46766:SF1">
    <property type="entry name" value="GLUTAMINE-RICH PROTEIN 2"/>
    <property type="match status" value="1"/>
</dbReference>
<dbReference type="Pfam" id="PF00823">
    <property type="entry name" value="PPE"/>
    <property type="match status" value="1"/>
</dbReference>
<dbReference type="Pfam" id="PF12484">
    <property type="entry name" value="PPE-SVP"/>
    <property type="match status" value="1"/>
</dbReference>
<dbReference type="SUPFAM" id="SSF140459">
    <property type="entry name" value="PE/PPE dimer-like"/>
    <property type="match status" value="1"/>
</dbReference>
<evidence type="ECO:0000305" key="1"/>
<comment type="similarity">
    <text evidence="1">Belongs to the mycobacterial PPE family.</text>
</comment>
<name>PPE30_MYCTU</name>
<sequence>MDFGVLPPEINSGRMYAGPGSGPMLAAAAAWDGLATELQSTAADYGSVISVLTGVWSGQSSGTMAAAAAPYVAWMSATAALAREAAAQASAAAAAYEAAFAATVPPPVVAANRAELAVLAATNIFGQNTGAIAAAEARYAEMWAQDAAAMYGYAGSSSVATQVTPFAAPPPTTNAAGLATQGVAVAQAVGASAGNARSLVSEVLEFLATAGTNYNKTVASLMNAVTGVPYASSVYNSMLGLGFAESKMVLPANDTVISTIFGMVQFQKFFNPVTPFNPDLIPKSALGAGLGLRSAISSGLGSTAPAISAGASQAGSVGGMSVPPSWAAATPAIRTVAAVFSSTGLQAVPAAAISEGSLLSQMALASVAGGALGGAAARATGGFLGGGRVTAVKKSLKDSDSPDKLRRVVAHMMEKPESVQHWHTDEDGLDDLLAELKKKPGIHAVHMAGGNKAEIAPTISESG</sequence>
<organism>
    <name type="scientific">Mycobacterium tuberculosis (strain ATCC 25618 / H37Rv)</name>
    <dbReference type="NCBI Taxonomy" id="83332"/>
    <lineage>
        <taxon>Bacteria</taxon>
        <taxon>Bacillati</taxon>
        <taxon>Actinomycetota</taxon>
        <taxon>Actinomycetes</taxon>
        <taxon>Mycobacteriales</taxon>
        <taxon>Mycobacteriaceae</taxon>
        <taxon>Mycobacterium</taxon>
        <taxon>Mycobacterium tuberculosis complex</taxon>
    </lineage>
</organism>
<accession>P9WI07</accession>
<accession>L0T7Y1</accession>
<accession>O53951</accession>
<accession>P0A692</accession>